<gene>
    <name evidence="1" type="primary">gppA</name>
    <name type="ordered locus">EcHS_A3995</name>
</gene>
<reference key="1">
    <citation type="journal article" date="2008" name="J. Bacteriol.">
        <title>The pangenome structure of Escherichia coli: comparative genomic analysis of E. coli commensal and pathogenic isolates.</title>
        <authorList>
            <person name="Rasko D.A."/>
            <person name="Rosovitz M.J."/>
            <person name="Myers G.S.A."/>
            <person name="Mongodin E.F."/>
            <person name="Fricke W.F."/>
            <person name="Gajer P."/>
            <person name="Crabtree J."/>
            <person name="Sebaihia M."/>
            <person name="Thomson N.R."/>
            <person name="Chaudhuri R."/>
            <person name="Henderson I.R."/>
            <person name="Sperandio V."/>
            <person name="Ravel J."/>
        </authorList>
    </citation>
    <scope>NUCLEOTIDE SEQUENCE [LARGE SCALE GENOMIC DNA]</scope>
    <source>
        <strain>HS</strain>
    </source>
</reference>
<sequence length="494" mass="54871">MGSTSSLYAAIDLGSNSFHMLVVREVAGSIQTLTRIKRKVRLAAGLNSENALSNEAMERGWQCLRLFAERLQDIPPSQIRVVATATLRLAVNAGDFIAKAQEILGCPVQVISGEEEARLIYQGVAHTTGGADQRLVVDIGGASTELVTGTGAQTTSLFSLSMGCVTWLERYFADRNLGQENFDAAEKAAREVLRPVADELRYHGWKVCVGASGTVQALQEIMMAQGMDERITLEKLQQLKQRAIHCGRLEELEIDGLTLERALVFPSGLAILIAIFTELNIQCMTLAGGALREGLVYGMLHLAVEQDIRSRTLRNIQRRFMIDIDQAQRVAKVAANFFDQVENEWHLEAISRDLLISACQLHEIGLSVDFKQAPQHAAYLVRNLDLPGFTPAQKKLLATLLLNQTNPVDLSSLHQQNAVPPRVAEQLCRLLRLAIIFASRRRDDLVPEMTLQANHELLTLTLPQGWLTQHPLGKEIIAQESQWQSYVHWPLEVH</sequence>
<evidence type="ECO:0000255" key="1">
    <source>
        <dbReference type="HAMAP-Rule" id="MF_01550"/>
    </source>
</evidence>
<comment type="function">
    <text evidence="1">Catalyzes the conversion of pppGpp to ppGpp. Guanosine pentaphosphate (pppGpp) is a cytoplasmic signaling molecule which together with ppGpp controls the 'stringent response', an adaptive process that allows bacteria to respond to amino acid starvation, resulting in the coordinated regulation of numerous cellular activities.</text>
</comment>
<comment type="catalytic activity">
    <reaction evidence="1">
        <text>guanosine 3'-diphosphate 5'-triphosphate + H2O = guanosine 3',5'-bis(diphosphate) + phosphate + H(+)</text>
        <dbReference type="Rhea" id="RHEA:13073"/>
        <dbReference type="ChEBI" id="CHEBI:15377"/>
        <dbReference type="ChEBI" id="CHEBI:15378"/>
        <dbReference type="ChEBI" id="CHEBI:43474"/>
        <dbReference type="ChEBI" id="CHEBI:77828"/>
        <dbReference type="ChEBI" id="CHEBI:142410"/>
        <dbReference type="EC" id="3.6.1.40"/>
    </reaction>
</comment>
<comment type="pathway">
    <text evidence="1">Purine metabolism; ppGpp biosynthesis; ppGpp from GTP: step 2/2.</text>
</comment>
<comment type="similarity">
    <text evidence="1">Belongs to the GppA/Ppx family. GppA subfamily.</text>
</comment>
<accession>A8A6N3</accession>
<dbReference type="EC" id="3.6.1.40" evidence="1"/>
<dbReference type="EMBL" id="CP000802">
    <property type="protein sequence ID" value="ABV08187.1"/>
    <property type="molecule type" value="Genomic_DNA"/>
</dbReference>
<dbReference type="RefSeq" id="WP_001295254.1">
    <property type="nucleotide sequence ID" value="NC_009800.1"/>
</dbReference>
<dbReference type="SMR" id="A8A6N3"/>
<dbReference type="GeneID" id="75174011"/>
<dbReference type="KEGG" id="ecx:EcHS_A3995"/>
<dbReference type="HOGENOM" id="CLU_025908_4_0_6"/>
<dbReference type="UniPathway" id="UPA00908">
    <property type="reaction ID" value="UER00885"/>
</dbReference>
<dbReference type="GO" id="GO:0008894">
    <property type="term" value="F:guanosine-5'-triphosphate,3'-diphosphate diphosphatase activity"/>
    <property type="evidence" value="ECO:0007669"/>
    <property type="project" value="UniProtKB-UniRule"/>
</dbReference>
<dbReference type="GO" id="GO:0015974">
    <property type="term" value="P:guanosine pentaphosphate catabolic process"/>
    <property type="evidence" value="ECO:0007669"/>
    <property type="project" value="InterPro"/>
</dbReference>
<dbReference type="GO" id="GO:0015970">
    <property type="term" value="P:guanosine tetraphosphate biosynthetic process"/>
    <property type="evidence" value="ECO:0007669"/>
    <property type="project" value="UniProtKB-UniRule"/>
</dbReference>
<dbReference type="GO" id="GO:0015949">
    <property type="term" value="P:nucleobase-containing small molecule interconversion"/>
    <property type="evidence" value="ECO:0007669"/>
    <property type="project" value="TreeGrafter"/>
</dbReference>
<dbReference type="CDD" id="cd24117">
    <property type="entry name" value="ASKHA_NBD_EcGppA-like"/>
    <property type="match status" value="1"/>
</dbReference>
<dbReference type="FunFam" id="1.10.3210.10:FF:000004">
    <property type="entry name" value="Guanosine-5'-triphosphate,3'-diphosphate pyrophosphatase"/>
    <property type="match status" value="1"/>
</dbReference>
<dbReference type="FunFam" id="3.30.420.150:FF:000001">
    <property type="entry name" value="Guanosine-5'-triphosphate,3'-diphosphate pyrophosphatase"/>
    <property type="match status" value="1"/>
</dbReference>
<dbReference type="FunFam" id="3.30.420.40:FF:000023">
    <property type="entry name" value="Guanosine-5'-triphosphate,3'-diphosphate pyrophosphatase"/>
    <property type="match status" value="1"/>
</dbReference>
<dbReference type="Gene3D" id="3.30.420.40">
    <property type="match status" value="1"/>
</dbReference>
<dbReference type="Gene3D" id="3.30.420.150">
    <property type="entry name" value="Exopolyphosphatase. Domain 2"/>
    <property type="match status" value="1"/>
</dbReference>
<dbReference type="Gene3D" id="1.10.3210.10">
    <property type="entry name" value="Hypothetical protein af1432"/>
    <property type="match status" value="1"/>
</dbReference>
<dbReference type="HAMAP" id="MF_01550">
    <property type="entry name" value="GppA"/>
    <property type="match status" value="1"/>
</dbReference>
<dbReference type="InterPro" id="IPR043129">
    <property type="entry name" value="ATPase_NBD"/>
</dbReference>
<dbReference type="InterPro" id="IPR050273">
    <property type="entry name" value="GppA/Ppx_hydrolase"/>
</dbReference>
<dbReference type="InterPro" id="IPR023709">
    <property type="entry name" value="Guo-5TP_3DP_PyrP"/>
</dbReference>
<dbReference type="InterPro" id="IPR048950">
    <property type="entry name" value="Ppx_GppA_C"/>
</dbReference>
<dbReference type="InterPro" id="IPR003695">
    <property type="entry name" value="Ppx_GppA_N"/>
</dbReference>
<dbReference type="InterPro" id="IPR030673">
    <property type="entry name" value="PyroPPase_GppA_Ppx"/>
</dbReference>
<dbReference type="NCBIfam" id="NF008260">
    <property type="entry name" value="PRK11031.1"/>
    <property type="match status" value="1"/>
</dbReference>
<dbReference type="PANTHER" id="PTHR30005">
    <property type="entry name" value="EXOPOLYPHOSPHATASE"/>
    <property type="match status" value="1"/>
</dbReference>
<dbReference type="PANTHER" id="PTHR30005:SF0">
    <property type="entry name" value="RETROGRADE REGULATION PROTEIN 2"/>
    <property type="match status" value="1"/>
</dbReference>
<dbReference type="Pfam" id="PF02541">
    <property type="entry name" value="Ppx-GppA"/>
    <property type="match status" value="1"/>
</dbReference>
<dbReference type="Pfam" id="PF21447">
    <property type="entry name" value="Ppx-GppA_III"/>
    <property type="match status" value="1"/>
</dbReference>
<dbReference type="PIRSF" id="PIRSF001267">
    <property type="entry name" value="Pyrophosphatase_GppA_Ppx"/>
    <property type="match status" value="1"/>
</dbReference>
<dbReference type="SUPFAM" id="SSF53067">
    <property type="entry name" value="Actin-like ATPase domain"/>
    <property type="match status" value="2"/>
</dbReference>
<dbReference type="SUPFAM" id="SSF109604">
    <property type="entry name" value="HD-domain/PDEase-like"/>
    <property type="match status" value="1"/>
</dbReference>
<proteinExistence type="inferred from homology"/>
<feature type="chain" id="PRO_1000068822" description="Guanosine-5'-triphosphate,3'-diphosphate pyrophosphatase">
    <location>
        <begin position="1"/>
        <end position="494"/>
    </location>
</feature>
<name>GPPA_ECOHS</name>
<organism>
    <name type="scientific">Escherichia coli O9:H4 (strain HS)</name>
    <dbReference type="NCBI Taxonomy" id="331112"/>
    <lineage>
        <taxon>Bacteria</taxon>
        <taxon>Pseudomonadati</taxon>
        <taxon>Pseudomonadota</taxon>
        <taxon>Gammaproteobacteria</taxon>
        <taxon>Enterobacterales</taxon>
        <taxon>Enterobacteriaceae</taxon>
        <taxon>Escherichia</taxon>
    </lineage>
</organism>
<keyword id="KW-0378">Hydrolase</keyword>
<protein>
    <recommendedName>
        <fullName evidence="1">Guanosine-5'-triphosphate,3'-diphosphate pyrophosphatase</fullName>
        <ecNumber evidence="1">3.6.1.40</ecNumber>
    </recommendedName>
    <alternativeName>
        <fullName evidence="1">Guanosine pentaphosphate phosphohydrolase</fullName>
    </alternativeName>
    <alternativeName>
        <fullName evidence="1">pppGpp-5'-phosphohydrolase</fullName>
    </alternativeName>
</protein>